<name>NUOB_BRUMB</name>
<sequence>MGLTGTNTTLVAPQPKGILDPRTGKPVGSDDAFFNDLNGELSDKGFIVTSADALITWARTGSLMWMTFGLACCAVEMMHISMPRYDAERFGIAPRASPRQSDVMIVAGTLTNKMAPALRKVYDQMPEPRYVISMGSCANGGGYYHYSYSVVRGCDRVVPVDIYVPGCPPTAEALLYGILLLQKKIRRTGTIER</sequence>
<dbReference type="EC" id="7.1.1.-" evidence="1"/>
<dbReference type="EMBL" id="CP001488">
    <property type="protein sequence ID" value="ACO00598.1"/>
    <property type="molecule type" value="Genomic_DNA"/>
</dbReference>
<dbReference type="RefSeq" id="WP_002967573.1">
    <property type="nucleotide sequence ID" value="NC_012441.1"/>
</dbReference>
<dbReference type="SMR" id="C0RIE0"/>
<dbReference type="KEGG" id="bmi:BMEA_A0845"/>
<dbReference type="HOGENOM" id="CLU_055737_7_3_5"/>
<dbReference type="Proteomes" id="UP000001748">
    <property type="component" value="Chromosome I"/>
</dbReference>
<dbReference type="GO" id="GO:0005886">
    <property type="term" value="C:plasma membrane"/>
    <property type="evidence" value="ECO:0007669"/>
    <property type="project" value="UniProtKB-SubCell"/>
</dbReference>
<dbReference type="GO" id="GO:0045271">
    <property type="term" value="C:respiratory chain complex I"/>
    <property type="evidence" value="ECO:0007669"/>
    <property type="project" value="TreeGrafter"/>
</dbReference>
<dbReference type="GO" id="GO:0051539">
    <property type="term" value="F:4 iron, 4 sulfur cluster binding"/>
    <property type="evidence" value="ECO:0007669"/>
    <property type="project" value="UniProtKB-KW"/>
</dbReference>
<dbReference type="GO" id="GO:0005506">
    <property type="term" value="F:iron ion binding"/>
    <property type="evidence" value="ECO:0007669"/>
    <property type="project" value="UniProtKB-UniRule"/>
</dbReference>
<dbReference type="GO" id="GO:0008137">
    <property type="term" value="F:NADH dehydrogenase (ubiquinone) activity"/>
    <property type="evidence" value="ECO:0007669"/>
    <property type="project" value="InterPro"/>
</dbReference>
<dbReference type="GO" id="GO:0050136">
    <property type="term" value="F:NADH:ubiquinone reductase (non-electrogenic) activity"/>
    <property type="evidence" value="ECO:0007669"/>
    <property type="project" value="UniProtKB-UniRule"/>
</dbReference>
<dbReference type="GO" id="GO:0048038">
    <property type="term" value="F:quinone binding"/>
    <property type="evidence" value="ECO:0007669"/>
    <property type="project" value="UniProtKB-KW"/>
</dbReference>
<dbReference type="GO" id="GO:0009060">
    <property type="term" value="P:aerobic respiration"/>
    <property type="evidence" value="ECO:0007669"/>
    <property type="project" value="TreeGrafter"/>
</dbReference>
<dbReference type="GO" id="GO:0015990">
    <property type="term" value="P:electron transport coupled proton transport"/>
    <property type="evidence" value="ECO:0007669"/>
    <property type="project" value="TreeGrafter"/>
</dbReference>
<dbReference type="FunFam" id="3.40.50.12280:FF:000001">
    <property type="entry name" value="NADH-quinone oxidoreductase subunit B 2"/>
    <property type="match status" value="1"/>
</dbReference>
<dbReference type="Gene3D" id="3.40.50.12280">
    <property type="match status" value="1"/>
</dbReference>
<dbReference type="HAMAP" id="MF_01356">
    <property type="entry name" value="NDH1_NuoB"/>
    <property type="match status" value="1"/>
</dbReference>
<dbReference type="InterPro" id="IPR006137">
    <property type="entry name" value="NADH_UbQ_OxRdtase-like_20kDa"/>
</dbReference>
<dbReference type="InterPro" id="IPR006138">
    <property type="entry name" value="NADH_UQ_OxRdtase_20Kd_su"/>
</dbReference>
<dbReference type="NCBIfam" id="TIGR01957">
    <property type="entry name" value="nuoB_fam"/>
    <property type="match status" value="1"/>
</dbReference>
<dbReference type="NCBIfam" id="NF005012">
    <property type="entry name" value="PRK06411.1"/>
    <property type="match status" value="1"/>
</dbReference>
<dbReference type="PANTHER" id="PTHR11995">
    <property type="entry name" value="NADH DEHYDROGENASE"/>
    <property type="match status" value="1"/>
</dbReference>
<dbReference type="PANTHER" id="PTHR11995:SF14">
    <property type="entry name" value="NADH DEHYDROGENASE [UBIQUINONE] IRON-SULFUR PROTEIN 7, MITOCHONDRIAL"/>
    <property type="match status" value="1"/>
</dbReference>
<dbReference type="Pfam" id="PF01058">
    <property type="entry name" value="Oxidored_q6"/>
    <property type="match status" value="1"/>
</dbReference>
<dbReference type="SUPFAM" id="SSF56770">
    <property type="entry name" value="HydA/Nqo6-like"/>
    <property type="match status" value="1"/>
</dbReference>
<dbReference type="PROSITE" id="PS01150">
    <property type="entry name" value="COMPLEX1_20K"/>
    <property type="match status" value="1"/>
</dbReference>
<protein>
    <recommendedName>
        <fullName evidence="1">NADH-quinone oxidoreductase subunit B</fullName>
        <ecNumber evidence="1">7.1.1.-</ecNumber>
    </recommendedName>
    <alternativeName>
        <fullName evidence="1">NADH dehydrogenase I subunit B</fullName>
    </alternativeName>
    <alternativeName>
        <fullName evidence="1">NDH-1 subunit B</fullName>
    </alternativeName>
</protein>
<gene>
    <name evidence="1" type="primary">nuoB</name>
    <name type="ordered locus">BMEA_A0845</name>
</gene>
<proteinExistence type="inferred from homology"/>
<comment type="function">
    <text evidence="1">NDH-1 shuttles electrons from NADH, via FMN and iron-sulfur (Fe-S) centers, to quinones in the respiratory chain. The immediate electron acceptor for the enzyme in this species is believed to be ubiquinone. Couples the redox reaction to proton translocation (for every two electrons transferred, four hydrogen ions are translocated across the cytoplasmic membrane), and thus conserves the redox energy in a proton gradient.</text>
</comment>
<comment type="catalytic activity">
    <reaction evidence="1">
        <text>a quinone + NADH + 5 H(+)(in) = a quinol + NAD(+) + 4 H(+)(out)</text>
        <dbReference type="Rhea" id="RHEA:57888"/>
        <dbReference type="ChEBI" id="CHEBI:15378"/>
        <dbReference type="ChEBI" id="CHEBI:24646"/>
        <dbReference type="ChEBI" id="CHEBI:57540"/>
        <dbReference type="ChEBI" id="CHEBI:57945"/>
        <dbReference type="ChEBI" id="CHEBI:132124"/>
    </reaction>
</comment>
<comment type="cofactor">
    <cofactor evidence="1">
        <name>[4Fe-4S] cluster</name>
        <dbReference type="ChEBI" id="CHEBI:49883"/>
    </cofactor>
    <text evidence="1">Binds 1 [4Fe-4S] cluster.</text>
</comment>
<comment type="subunit">
    <text evidence="1">NDH-1 is composed of 14 different subunits. Subunits NuoB, C, D, E, F, and G constitute the peripheral sector of the complex.</text>
</comment>
<comment type="subcellular location">
    <subcellularLocation>
        <location evidence="1">Cell inner membrane</location>
        <topology evidence="1">Peripheral membrane protein</topology>
        <orientation evidence="1">Cytoplasmic side</orientation>
    </subcellularLocation>
</comment>
<comment type="similarity">
    <text evidence="1">Belongs to the complex I 20 kDa subunit family.</text>
</comment>
<evidence type="ECO:0000255" key="1">
    <source>
        <dbReference type="HAMAP-Rule" id="MF_01356"/>
    </source>
</evidence>
<evidence type="ECO:0000256" key="2">
    <source>
        <dbReference type="SAM" id="MobiDB-lite"/>
    </source>
</evidence>
<reference key="1">
    <citation type="submission" date="2009-03" db="EMBL/GenBank/DDBJ databases">
        <title>Brucella melitensis ATCC 23457 whole genome shotgun sequencing project.</title>
        <authorList>
            <person name="Setubal J.C."/>
            <person name="Boyle S."/>
            <person name="Crasta O.R."/>
            <person name="Gillespie J.J."/>
            <person name="Kenyon R.W."/>
            <person name="Lu J."/>
            <person name="Mane S."/>
            <person name="Nagrani S."/>
            <person name="Shallom J.M."/>
            <person name="Shallom S."/>
            <person name="Shukla M."/>
            <person name="Snyder E.E."/>
            <person name="Sobral B.W."/>
            <person name="Wattam A.R."/>
            <person name="Will R."/>
            <person name="Williams K."/>
            <person name="Yoo H."/>
            <person name="Munk C."/>
            <person name="Tapia R."/>
            <person name="Han C."/>
            <person name="Detter J.C."/>
            <person name="Bruce D."/>
            <person name="Brettin T.S."/>
        </authorList>
    </citation>
    <scope>NUCLEOTIDE SEQUENCE [LARGE SCALE GENOMIC DNA]</scope>
    <source>
        <strain>ATCC 23457</strain>
    </source>
</reference>
<feature type="chain" id="PRO_1000166651" description="NADH-quinone oxidoreductase subunit B">
    <location>
        <begin position="1"/>
        <end position="193"/>
    </location>
</feature>
<feature type="region of interest" description="Disordered" evidence="2">
    <location>
        <begin position="1"/>
        <end position="23"/>
    </location>
</feature>
<feature type="compositionally biased region" description="Polar residues" evidence="2">
    <location>
        <begin position="1"/>
        <end position="11"/>
    </location>
</feature>
<feature type="binding site" evidence="1">
    <location>
        <position position="72"/>
    </location>
    <ligand>
        <name>[4Fe-4S] cluster</name>
        <dbReference type="ChEBI" id="CHEBI:49883"/>
    </ligand>
</feature>
<feature type="binding site" evidence="1">
    <location>
        <position position="73"/>
    </location>
    <ligand>
        <name>[4Fe-4S] cluster</name>
        <dbReference type="ChEBI" id="CHEBI:49883"/>
    </ligand>
</feature>
<feature type="binding site" evidence="1">
    <location>
        <position position="137"/>
    </location>
    <ligand>
        <name>[4Fe-4S] cluster</name>
        <dbReference type="ChEBI" id="CHEBI:49883"/>
    </ligand>
</feature>
<feature type="binding site" evidence="1">
    <location>
        <position position="167"/>
    </location>
    <ligand>
        <name>[4Fe-4S] cluster</name>
        <dbReference type="ChEBI" id="CHEBI:49883"/>
    </ligand>
</feature>
<accession>C0RIE0</accession>
<keyword id="KW-0004">4Fe-4S</keyword>
<keyword id="KW-0997">Cell inner membrane</keyword>
<keyword id="KW-1003">Cell membrane</keyword>
<keyword id="KW-0408">Iron</keyword>
<keyword id="KW-0411">Iron-sulfur</keyword>
<keyword id="KW-0472">Membrane</keyword>
<keyword id="KW-0479">Metal-binding</keyword>
<keyword id="KW-0520">NAD</keyword>
<keyword id="KW-0874">Quinone</keyword>
<keyword id="KW-1278">Translocase</keyword>
<keyword id="KW-0813">Transport</keyword>
<keyword id="KW-0830">Ubiquinone</keyword>
<organism>
    <name type="scientific">Brucella melitensis biotype 2 (strain ATCC 23457)</name>
    <dbReference type="NCBI Taxonomy" id="546272"/>
    <lineage>
        <taxon>Bacteria</taxon>
        <taxon>Pseudomonadati</taxon>
        <taxon>Pseudomonadota</taxon>
        <taxon>Alphaproteobacteria</taxon>
        <taxon>Hyphomicrobiales</taxon>
        <taxon>Brucellaceae</taxon>
        <taxon>Brucella/Ochrobactrum group</taxon>
        <taxon>Brucella</taxon>
    </lineage>
</organism>